<accession>P44942</accession>
<feature type="signal peptide" evidence="2">
    <location>
        <begin position="1"/>
        <end position="35"/>
    </location>
</feature>
<feature type="chain" id="PRO_0000006616" description="Formate-dependent nitrite reductase complex bifunctional subunit NrfFG">
    <location>
        <begin position="36"/>
        <end position="384"/>
    </location>
</feature>
<feature type="repeat" description="TPR 1">
    <location>
        <begin position="221"/>
        <end position="254"/>
    </location>
</feature>
<feature type="repeat" description="TPR 2">
    <location>
        <begin position="255"/>
        <end position="288"/>
    </location>
</feature>
<feature type="region of interest" description="NrfF">
    <location>
        <begin position="36"/>
        <end position="144"/>
    </location>
</feature>
<feature type="region of interest" description="NrfG">
    <location>
        <begin position="180"/>
        <end position="384"/>
    </location>
</feature>
<feature type="binding site" description="covalent" evidence="2">
    <location>
        <position position="61"/>
    </location>
    <ligand>
        <name>heme</name>
        <dbReference type="ChEBI" id="CHEBI:30413"/>
    </ligand>
</feature>
<feature type="binding site" description="covalent" evidence="2">
    <location>
        <position position="64"/>
    </location>
    <ligand>
        <name>heme</name>
        <dbReference type="ChEBI" id="CHEBI:30413"/>
    </ligand>
</feature>
<keyword id="KW-0349">Heme</keyword>
<keyword id="KW-0408">Iron</keyword>
<keyword id="KW-0479">Metal-binding</keyword>
<keyword id="KW-0574">Periplasm</keyword>
<keyword id="KW-1185">Reference proteome</keyword>
<keyword id="KW-0677">Repeat</keyword>
<keyword id="KW-0732">Signal</keyword>
<keyword id="KW-0802">TPR repeat</keyword>
<protein>
    <recommendedName>
        <fullName>Formate-dependent nitrite reductase complex bifunctional subunit NrfFG</fullName>
    </recommendedName>
</protein>
<gene>
    <name type="primary">nrfF</name>
    <name type="ordered locus">HI_0934</name>
</gene>
<proteinExistence type="inferred from homology"/>
<reference key="1">
    <citation type="journal article" date="1995" name="Science">
        <title>Whole-genome random sequencing and assembly of Haemophilus influenzae Rd.</title>
        <authorList>
            <person name="Fleischmann R.D."/>
            <person name="Adams M.D."/>
            <person name="White O."/>
            <person name="Clayton R.A."/>
            <person name="Kirkness E.F."/>
            <person name="Kerlavage A.R."/>
            <person name="Bult C.J."/>
            <person name="Tomb J.-F."/>
            <person name="Dougherty B.A."/>
            <person name="Merrick J.M."/>
            <person name="McKenney K."/>
            <person name="Sutton G.G."/>
            <person name="FitzHugh W."/>
            <person name="Fields C.A."/>
            <person name="Gocayne J.D."/>
            <person name="Scott J.D."/>
            <person name="Shirley R."/>
            <person name="Liu L.-I."/>
            <person name="Glodek A."/>
            <person name="Kelley J.M."/>
            <person name="Weidman J.F."/>
            <person name="Phillips C.A."/>
            <person name="Spriggs T."/>
            <person name="Hedblom E."/>
            <person name="Cotton M.D."/>
            <person name="Utterback T.R."/>
            <person name="Hanna M.C."/>
            <person name="Nguyen D.T."/>
            <person name="Saudek D.M."/>
            <person name="Brandon R.C."/>
            <person name="Fine L.D."/>
            <person name="Fritchman J.L."/>
            <person name="Fuhrmann J.L."/>
            <person name="Geoghagen N.S.M."/>
            <person name="Gnehm C.L."/>
            <person name="McDonald L.A."/>
            <person name="Small K.V."/>
            <person name="Fraser C.M."/>
            <person name="Smith H.O."/>
            <person name="Venter J.C."/>
        </authorList>
    </citation>
    <scope>NUCLEOTIDE SEQUENCE [LARGE SCALE GENOMIC DNA]</scope>
    <source>
        <strain>ATCC 51907 / DSM 11121 / KW20 / Rd</strain>
    </source>
</reference>
<name>NRFF_HAEIN</name>
<sequence>MKSILDIFTRGFIQVQKTVFFATALLFAFSLFTQAEMVDTYQFQNQDDRTRAVELAKSLRCPQCQNQNLVESNSPIAYDLRLEVYKMVDEGKSNQQIIDKMTARFGDFVNYKPPFKWNTALLWLLPVALLILAAVLLYFSNRKKQFSEKVVAQQLENDEIISLPSTFGSSPRKQGEPSKLSKGKVNSKIYFVLFTLLIAIPATYYFSLDRFSRVQQGEQSMIEQHNQNVEMNDEHKNENVIEKLQNKLRTDPNNAETWLQLGEAYVQNNEFDSALVAYSNAEKLSGSKPNILGLAATALYYQAGQQMTQKVEQLLNEALAKDKNEVSSLSLLATIALENRQYQQAGMYLQQLLDSGNAAVDRRSVIQRMKMLDFLQRGEKGQNP</sequence>
<dbReference type="EMBL" id="L42023">
    <property type="protein sequence ID" value="AAC22592.1"/>
    <property type="molecule type" value="Genomic_DNA"/>
</dbReference>
<dbReference type="PIR" id="H64161">
    <property type="entry name" value="H64161"/>
</dbReference>
<dbReference type="RefSeq" id="NP_439094.1">
    <property type="nucleotide sequence ID" value="NC_000907.1"/>
</dbReference>
<dbReference type="SMR" id="P44942"/>
<dbReference type="STRING" id="71421.HI_0934"/>
<dbReference type="EnsemblBacteria" id="AAC22592">
    <property type="protein sequence ID" value="AAC22592"/>
    <property type="gene ID" value="HI_0934"/>
</dbReference>
<dbReference type="KEGG" id="hin:HI_0934"/>
<dbReference type="PATRIC" id="fig|71421.8.peg.975"/>
<dbReference type="eggNOG" id="COG3088">
    <property type="taxonomic scope" value="Bacteria"/>
</dbReference>
<dbReference type="eggNOG" id="COG4235">
    <property type="taxonomic scope" value="Bacteria"/>
</dbReference>
<dbReference type="HOGENOM" id="CLU_036074_0_1_6"/>
<dbReference type="OrthoDB" id="9776053at2"/>
<dbReference type="PhylomeDB" id="P44942"/>
<dbReference type="BioCyc" id="HINF71421:G1GJ1-974-MONOMER"/>
<dbReference type="Proteomes" id="UP000000579">
    <property type="component" value="Chromosome"/>
</dbReference>
<dbReference type="GO" id="GO:0042597">
    <property type="term" value="C:periplasmic space"/>
    <property type="evidence" value="ECO:0007669"/>
    <property type="project" value="UniProtKB-SubCell"/>
</dbReference>
<dbReference type="GO" id="GO:0005886">
    <property type="term" value="C:plasma membrane"/>
    <property type="evidence" value="ECO:0000318"/>
    <property type="project" value="GO_Central"/>
</dbReference>
<dbReference type="GO" id="GO:0046872">
    <property type="term" value="F:metal ion binding"/>
    <property type="evidence" value="ECO:0007669"/>
    <property type="project" value="UniProtKB-KW"/>
</dbReference>
<dbReference type="CDD" id="cd16378">
    <property type="entry name" value="CcmH_N"/>
    <property type="match status" value="1"/>
</dbReference>
<dbReference type="FunFam" id="1.10.8.640:FF:000001">
    <property type="entry name" value="Cytochrome c-type biogenesis protein"/>
    <property type="match status" value="1"/>
</dbReference>
<dbReference type="Gene3D" id="1.10.8.640">
    <property type="entry name" value="Cytochrome C biogenesis protein"/>
    <property type="match status" value="1"/>
</dbReference>
<dbReference type="Gene3D" id="1.25.40.10">
    <property type="entry name" value="Tetratricopeptide repeat domain"/>
    <property type="match status" value="1"/>
</dbReference>
<dbReference type="InterPro" id="IPR051263">
    <property type="entry name" value="C-type_cytochrome_biogenesis"/>
</dbReference>
<dbReference type="InterPro" id="IPR005616">
    <property type="entry name" value="CcmH/CycL/Ccl2/NrfF_N"/>
</dbReference>
<dbReference type="InterPro" id="IPR038297">
    <property type="entry name" value="CcmH/CycL/NrfF/Ccl2_sf"/>
</dbReference>
<dbReference type="InterPro" id="IPR017565">
    <property type="entry name" value="For-dep_Cytc_NO2Rdtase_NrfF"/>
</dbReference>
<dbReference type="InterPro" id="IPR011990">
    <property type="entry name" value="TPR-like_helical_dom_sf"/>
</dbReference>
<dbReference type="InterPro" id="IPR056413">
    <property type="entry name" value="TPR_CcmH_CycH"/>
</dbReference>
<dbReference type="InterPro" id="IPR019734">
    <property type="entry name" value="TPR_rpt"/>
</dbReference>
<dbReference type="NCBIfam" id="TIGR03147">
    <property type="entry name" value="cyt_nit_nrfF"/>
    <property type="match status" value="1"/>
</dbReference>
<dbReference type="PANTHER" id="PTHR47870">
    <property type="entry name" value="CYTOCHROME C-TYPE BIOGENESIS PROTEIN CCMH"/>
    <property type="match status" value="1"/>
</dbReference>
<dbReference type="PANTHER" id="PTHR47870:SF2">
    <property type="entry name" value="FORMATE-DEPENDENT NITRITE REDUCTASE COMPLEX SUBUNIT NRFF"/>
    <property type="match status" value="1"/>
</dbReference>
<dbReference type="Pfam" id="PF03918">
    <property type="entry name" value="CcmH"/>
    <property type="match status" value="1"/>
</dbReference>
<dbReference type="Pfam" id="PF23914">
    <property type="entry name" value="TPR_CcmH_CycH"/>
    <property type="match status" value="1"/>
</dbReference>
<dbReference type="SMART" id="SM00028">
    <property type="entry name" value="TPR"/>
    <property type="match status" value="1"/>
</dbReference>
<dbReference type="SUPFAM" id="SSF48452">
    <property type="entry name" value="TPR-like"/>
    <property type="match status" value="1"/>
</dbReference>
<dbReference type="PROSITE" id="PS50005">
    <property type="entry name" value="TPR"/>
    <property type="match status" value="1"/>
</dbReference>
<dbReference type="PROSITE" id="PS50293">
    <property type="entry name" value="TPR_REGION"/>
    <property type="match status" value="1"/>
</dbReference>
<comment type="function">
    <text evidence="1">Possible subunit of a heme lyase.</text>
</comment>
<comment type="subcellular location">
    <subcellularLocation>
        <location evidence="3">Periplasm</location>
    </subcellularLocation>
</comment>
<comment type="similarity">
    <text evidence="3">Belongs to the CcmH/CycL/Ccl2/NrfF family.</text>
</comment>
<evidence type="ECO:0000250" key="1"/>
<evidence type="ECO:0000255" key="2"/>
<evidence type="ECO:0000305" key="3"/>
<organism>
    <name type="scientific">Haemophilus influenzae (strain ATCC 51907 / DSM 11121 / KW20 / Rd)</name>
    <dbReference type="NCBI Taxonomy" id="71421"/>
    <lineage>
        <taxon>Bacteria</taxon>
        <taxon>Pseudomonadati</taxon>
        <taxon>Pseudomonadota</taxon>
        <taxon>Gammaproteobacteria</taxon>
        <taxon>Pasteurellales</taxon>
        <taxon>Pasteurellaceae</taxon>
        <taxon>Haemophilus</taxon>
    </lineage>
</organism>